<sequence>MVHLTGEEKAAVTALWGKVNVDEVGGEALGRLLVVYPWTQRFFESFGDLSTPDAVMSNPKVKAHGKKVLGAFSDGLAHLDNLKGTFAQLSELHCDKLHVDPENFRLLGNVLVCVLAHHFGKEFTPQLQAAYQKVVAGVANALAHKYH</sequence>
<dbReference type="PIR" id="A90233">
    <property type="entry name" value="HBMKP"/>
</dbReference>
<dbReference type="SMR" id="P68232"/>
<dbReference type="OrthoDB" id="9886081at2759"/>
<dbReference type="GO" id="GO:0072562">
    <property type="term" value="C:blood microparticle"/>
    <property type="evidence" value="ECO:0007669"/>
    <property type="project" value="TreeGrafter"/>
</dbReference>
<dbReference type="GO" id="GO:0031838">
    <property type="term" value="C:haptoglobin-hemoglobin complex"/>
    <property type="evidence" value="ECO:0007669"/>
    <property type="project" value="TreeGrafter"/>
</dbReference>
<dbReference type="GO" id="GO:0005833">
    <property type="term" value="C:hemoglobin complex"/>
    <property type="evidence" value="ECO:0007669"/>
    <property type="project" value="InterPro"/>
</dbReference>
<dbReference type="GO" id="GO:0031720">
    <property type="term" value="F:haptoglobin binding"/>
    <property type="evidence" value="ECO:0007669"/>
    <property type="project" value="TreeGrafter"/>
</dbReference>
<dbReference type="GO" id="GO:0020037">
    <property type="term" value="F:heme binding"/>
    <property type="evidence" value="ECO:0007669"/>
    <property type="project" value="InterPro"/>
</dbReference>
<dbReference type="GO" id="GO:0031721">
    <property type="term" value="F:hemoglobin alpha binding"/>
    <property type="evidence" value="ECO:0007669"/>
    <property type="project" value="TreeGrafter"/>
</dbReference>
<dbReference type="GO" id="GO:0046872">
    <property type="term" value="F:metal ion binding"/>
    <property type="evidence" value="ECO:0007669"/>
    <property type="project" value="UniProtKB-KW"/>
</dbReference>
<dbReference type="GO" id="GO:0043177">
    <property type="term" value="F:organic acid binding"/>
    <property type="evidence" value="ECO:0007669"/>
    <property type="project" value="TreeGrafter"/>
</dbReference>
<dbReference type="GO" id="GO:0019825">
    <property type="term" value="F:oxygen binding"/>
    <property type="evidence" value="ECO:0007669"/>
    <property type="project" value="InterPro"/>
</dbReference>
<dbReference type="GO" id="GO:0005344">
    <property type="term" value="F:oxygen carrier activity"/>
    <property type="evidence" value="ECO:0007669"/>
    <property type="project" value="UniProtKB-KW"/>
</dbReference>
<dbReference type="GO" id="GO:0004601">
    <property type="term" value="F:peroxidase activity"/>
    <property type="evidence" value="ECO:0007669"/>
    <property type="project" value="TreeGrafter"/>
</dbReference>
<dbReference type="GO" id="GO:0042744">
    <property type="term" value="P:hydrogen peroxide catabolic process"/>
    <property type="evidence" value="ECO:0007669"/>
    <property type="project" value="TreeGrafter"/>
</dbReference>
<dbReference type="CDD" id="cd08925">
    <property type="entry name" value="Hb-beta-like"/>
    <property type="match status" value="1"/>
</dbReference>
<dbReference type="FunFam" id="1.10.490.10:FF:000001">
    <property type="entry name" value="Hemoglobin subunit beta"/>
    <property type="match status" value="1"/>
</dbReference>
<dbReference type="Gene3D" id="1.10.490.10">
    <property type="entry name" value="Globins"/>
    <property type="match status" value="1"/>
</dbReference>
<dbReference type="InterPro" id="IPR000971">
    <property type="entry name" value="Globin"/>
</dbReference>
<dbReference type="InterPro" id="IPR009050">
    <property type="entry name" value="Globin-like_sf"/>
</dbReference>
<dbReference type="InterPro" id="IPR012292">
    <property type="entry name" value="Globin/Proto"/>
</dbReference>
<dbReference type="InterPro" id="IPR002337">
    <property type="entry name" value="Hemoglobin_b"/>
</dbReference>
<dbReference type="InterPro" id="IPR050056">
    <property type="entry name" value="Hemoglobin_oxygen_transport"/>
</dbReference>
<dbReference type="PANTHER" id="PTHR11442">
    <property type="entry name" value="HEMOGLOBIN FAMILY MEMBER"/>
    <property type="match status" value="1"/>
</dbReference>
<dbReference type="PANTHER" id="PTHR11442:SF42">
    <property type="entry name" value="HEMOGLOBIN SUBUNIT BETA"/>
    <property type="match status" value="1"/>
</dbReference>
<dbReference type="Pfam" id="PF00042">
    <property type="entry name" value="Globin"/>
    <property type="match status" value="1"/>
</dbReference>
<dbReference type="PRINTS" id="PR00814">
    <property type="entry name" value="BETAHAEM"/>
</dbReference>
<dbReference type="SUPFAM" id="SSF46458">
    <property type="entry name" value="Globin-like"/>
    <property type="match status" value="1"/>
</dbReference>
<dbReference type="PROSITE" id="PS01033">
    <property type="entry name" value="GLOBIN"/>
    <property type="match status" value="1"/>
</dbReference>
<accession>P68232</accession>
<accession>P02034</accession>
<organism>
    <name type="scientific">Ateles geoffroyi</name>
    <name type="common">Black-handed spider monkey</name>
    <name type="synonym">Geoffroy's spider monkey</name>
    <dbReference type="NCBI Taxonomy" id="9509"/>
    <lineage>
        <taxon>Eukaryota</taxon>
        <taxon>Metazoa</taxon>
        <taxon>Chordata</taxon>
        <taxon>Craniata</taxon>
        <taxon>Vertebrata</taxon>
        <taxon>Euteleostomi</taxon>
        <taxon>Mammalia</taxon>
        <taxon>Eutheria</taxon>
        <taxon>Euarchontoglires</taxon>
        <taxon>Primates</taxon>
        <taxon>Haplorrhini</taxon>
        <taxon>Platyrrhini</taxon>
        <taxon>Atelidae</taxon>
        <taxon>Atelinae</taxon>
        <taxon>Ateles</taxon>
    </lineage>
</organism>
<comment type="function">
    <text>Involved in oxygen transport from the lung to the various peripheral tissues.</text>
</comment>
<comment type="subunit">
    <text>Heterotetramer of two alpha chains and two beta chains.</text>
</comment>
<comment type="tissue specificity">
    <text>Red blood cells.</text>
</comment>
<comment type="similarity">
    <text evidence="4">Belongs to the globin family.</text>
</comment>
<reference key="1">
    <citation type="journal article" date="1971" name="Biochem. Genet.">
        <title>Primate hemoglobins: some sequences and some proposals concerning the character of evolution and mutation.</title>
        <authorList>
            <person name="Boyer S.H."/>
            <person name="Crosby E.F."/>
            <person name="Noyes A.N."/>
            <person name="Fuller G.F."/>
            <person name="Leslie S.E."/>
            <person name="Donaldson L.J."/>
            <person name="Vrablik G.R."/>
            <person name="Schaefer E.W. Jr."/>
            <person name="Thurmon T.F."/>
        </authorList>
    </citation>
    <scope>PROTEIN SEQUENCE OF 2-147</scope>
</reference>
<gene>
    <name type="primary">HBB</name>
</gene>
<proteinExistence type="evidence at protein level"/>
<evidence type="ECO:0000250" key="1">
    <source>
        <dbReference type="UniProtKB" id="P02086"/>
    </source>
</evidence>
<evidence type="ECO:0000250" key="2">
    <source>
        <dbReference type="UniProtKB" id="P18983"/>
    </source>
</evidence>
<evidence type="ECO:0000250" key="3">
    <source>
        <dbReference type="UniProtKB" id="P68871"/>
    </source>
</evidence>
<evidence type="ECO:0000255" key="4">
    <source>
        <dbReference type="PROSITE-ProRule" id="PRU00238"/>
    </source>
</evidence>
<keyword id="KW-0007">Acetylation</keyword>
<keyword id="KW-0903">Direct protein sequencing</keyword>
<keyword id="KW-0349">Heme</keyword>
<keyword id="KW-0408">Iron</keyword>
<keyword id="KW-0479">Metal-binding</keyword>
<keyword id="KW-0561">Oxygen transport</keyword>
<keyword id="KW-0597">Phosphoprotein</keyword>
<keyword id="KW-0702">S-nitrosylation</keyword>
<keyword id="KW-0813">Transport</keyword>
<name>HBB_ATEGE</name>
<feature type="initiator methionine" description="Removed" evidence="1 2">
    <location>
        <position position="1"/>
    </location>
</feature>
<feature type="chain" id="PRO_0000052884" description="Hemoglobin subunit beta">
    <location>
        <begin position="2"/>
        <end position="147"/>
    </location>
</feature>
<feature type="domain" description="Globin" evidence="4">
    <location>
        <begin position="3"/>
        <end position="147"/>
    </location>
</feature>
<feature type="binding site" description="distal binding residue">
    <location>
        <position position="64"/>
    </location>
    <ligand>
        <name>heme b</name>
        <dbReference type="ChEBI" id="CHEBI:60344"/>
    </ligand>
    <ligandPart>
        <name>Fe</name>
        <dbReference type="ChEBI" id="CHEBI:18248"/>
    </ligandPart>
</feature>
<feature type="binding site" description="proximal binding residue">
    <location>
        <position position="93"/>
    </location>
    <ligand>
        <name>heme b</name>
        <dbReference type="ChEBI" id="CHEBI:60344"/>
    </ligand>
    <ligandPart>
        <name>Fe</name>
        <dbReference type="ChEBI" id="CHEBI:18248"/>
    </ligandPart>
</feature>
<feature type="modified residue" description="N-acetylvaline" evidence="1">
    <location>
        <position position="2"/>
    </location>
</feature>
<feature type="modified residue" description="Phosphothreonine" evidence="3">
    <location>
        <position position="13"/>
    </location>
</feature>
<feature type="modified residue" description="Phosphoserine" evidence="3">
    <location>
        <position position="45"/>
    </location>
</feature>
<feature type="modified residue" description="N6-acetyllysine" evidence="3">
    <location>
        <position position="60"/>
    </location>
</feature>
<feature type="modified residue" description="N6-acetyllysine" evidence="3">
    <location>
        <position position="83"/>
    </location>
</feature>
<feature type="modified residue" description="S-nitrosocysteine" evidence="3">
    <location>
        <position position="94"/>
    </location>
</feature>
<feature type="modified residue" description="N6-acetyllysine" evidence="3">
    <location>
        <position position="145"/>
    </location>
</feature>
<protein>
    <recommendedName>
        <fullName>Hemoglobin subunit beta</fullName>
    </recommendedName>
    <alternativeName>
        <fullName>Beta-globin</fullName>
    </alternativeName>
    <alternativeName>
        <fullName>Hemoglobin beta chain</fullName>
    </alternativeName>
</protein>